<evidence type="ECO:0000255" key="1">
    <source>
        <dbReference type="PROSITE-ProRule" id="PRU00539"/>
    </source>
</evidence>
<evidence type="ECO:0000305" key="2"/>
<accession>P17459</accession>
<accession>Q9WJD6</accession>
<proteinExistence type="inferred from homology"/>
<organismHost>
    <name type="scientific">Cymbidium</name>
    <dbReference type="NCBI Taxonomy" id="14366"/>
</organismHost>
<organismHost>
    <name type="scientific">Trifolium repens</name>
    <name type="common">Creeping white clover</name>
    <dbReference type="NCBI Taxonomy" id="3899"/>
</organismHost>
<gene>
    <name type="ORF">ORF1</name>
</gene>
<protein>
    <recommendedName>
        <fullName>RNA-directed RNA polymerase</fullName>
        <ecNumber>2.7.7.48</ecNumber>
    </recommendedName>
    <alternativeName>
        <fullName>Protein p92</fullName>
    </alternativeName>
    <component>
        <recommendedName>
            <fullName>Protein p33</fullName>
        </recommendedName>
    </component>
</protein>
<reference key="1">
    <citation type="journal article" date="1989" name="Nucleic Acids Res.">
        <title>The nucleotide sequence of cymbidium ringspot virus RNA.</title>
        <authorList>
            <person name="Grieco F."/>
            <person name="Burgyan J."/>
            <person name="Russo M."/>
        </authorList>
    </citation>
    <scope>NUCLEOTIDE SEQUENCE [GENOMIC RNA]</scope>
</reference>
<keyword id="KW-0547">Nucleotide-binding</keyword>
<keyword id="KW-0548">Nucleotidyltransferase</keyword>
<keyword id="KW-1159">RNA suppression of termination</keyword>
<keyword id="KW-0696">RNA-directed RNA polymerase</keyword>
<keyword id="KW-0808">Transferase</keyword>
<keyword id="KW-0693">Viral RNA replication</keyword>
<feature type="chain" id="PRO_0000041334" description="RNA-directed RNA polymerase">
    <location>
        <begin position="1"/>
        <end position="818"/>
    </location>
</feature>
<feature type="chain" id="PRO_0000041335" description="Protein p33">
    <location>
        <begin position="1"/>
        <end position="296"/>
    </location>
</feature>
<feature type="domain" description="RdRp catalytic" evidence="1">
    <location>
        <begin position="524"/>
        <end position="641"/>
    </location>
</feature>
<sequence length="818" mass="91948">METIKRLIWPKKEIFVGDFAIGVNRTVPVDVFQLVCRVVLRYMRTGKIECESDSLSKFVVELLKTDCAAKWEWFMKRRQGGDYIVPLSIATIPLMPLLSCTTSVRAVSVGVLGCGFSSNIPIPRLSVPRKGLLLRLAAGLALAPICALAVYATLPREKLSVYKLRTEARTHMEDEKEATDCLVVESARELKGKDGEDLLTGSRMTKVVASTGRRRRTPYAAKVAQVARAKVGYLRNTPENRLIYQRVIIEIMDKDCVRYVDRDVILPMAIGCCFVYQDGVEESAALWGSQDSLGVKXGGLVRLPGVVTQINRDIPSDVLLPQEVLEVRTGPPIAKDRNIFMVAGCPSQARFLVHNHCLKNLKRGLVERVFCVEKDGKLTRTPQPTKGSFGRLSPFRKAVCEKVGVAHRLGYDGFLSYYSGAKLRTYTRAVESLHITPVSERDSHLTTFVKAEKISTSKGDPAPRVIQPRNPRYNVELGRYLRHMESKLMKAVDDVFGETTCIKGYTADEVGAIFRRKWDRFDKPVAIGLDASRFDQHCSVEALQYEHSFYRALYPGNKLLSKLLEWQLHNKGKGYVPDGTITYKKEGCRMSGDINTSLGNYLLMCAMVHGYMRHLGINEFSLANCGDDCVLIIERRNLKRVQGTLPGYFLNLGYTMKVESPVFQLEEVEFCQAHPVQFQGGWKMVRNVRTAMSKDVHCVNNIRDLATRRAWSNAQHHGGLALSAGIPVVERFYSRFPLYDMPVKHQRIDTVTNVHKWRGSGGNYHVTPESRASFWAAFGLTGDEQVALEDRLDRWEMDLFGREGVDAHEPSILDSAVA</sequence>
<organism>
    <name type="scientific">Cymbidium ringspot virus</name>
    <name type="common">CymRSV</name>
    <dbReference type="NCBI Taxonomy" id="12144"/>
    <lineage>
        <taxon>Viruses</taxon>
        <taxon>Riboviria</taxon>
        <taxon>Orthornavirae</taxon>
        <taxon>Kitrinoviricota</taxon>
        <taxon>Tolucaviricetes</taxon>
        <taxon>Tolivirales</taxon>
        <taxon>Tombusviridae</taxon>
        <taxon>Procedovirinae</taxon>
        <taxon>Tombusvirus</taxon>
        <taxon>Tombusvirus cymbidii</taxon>
    </lineage>
</organism>
<name>RDRP_CRV</name>
<comment type="function">
    <text evidence="2">RNA-dependent RNA polymerase that plays an essential role in the virus replication.</text>
</comment>
<comment type="catalytic activity">
    <reaction evidence="1">
        <text>RNA(n) + a ribonucleoside 5'-triphosphate = RNA(n+1) + diphosphate</text>
        <dbReference type="Rhea" id="RHEA:21248"/>
        <dbReference type="Rhea" id="RHEA-COMP:14527"/>
        <dbReference type="Rhea" id="RHEA-COMP:17342"/>
        <dbReference type="ChEBI" id="CHEBI:33019"/>
        <dbReference type="ChEBI" id="CHEBI:61557"/>
        <dbReference type="ChEBI" id="CHEBI:140395"/>
        <dbReference type="EC" id="2.7.7.48"/>
    </reaction>
</comment>
<comment type="miscellaneous">
    <text>Readthrough of the terminator UAG occurs at position 297.</text>
</comment>
<comment type="similarity">
    <text evidence="2">Belongs to the tombusviridae RNA polymerase family.</text>
</comment>
<dbReference type="EC" id="2.7.7.48"/>
<dbReference type="EMBL" id="X15511">
    <property type="protein sequence ID" value="CAA33532.1"/>
    <property type="molecule type" value="Genomic_RNA"/>
</dbReference>
<dbReference type="EMBL" id="X15511">
    <property type="protein sequence ID" value="CAB38439.1"/>
    <property type="molecule type" value="Genomic_RNA"/>
</dbReference>
<dbReference type="PIR" id="S05456">
    <property type="entry name" value="RRVGCR"/>
</dbReference>
<dbReference type="RefSeq" id="NP_613260.1">
    <property type="nucleotide sequence ID" value="NC_003532.1"/>
</dbReference>
<dbReference type="RefSeq" id="NP_613261.1">
    <property type="nucleotide sequence ID" value="NC_003532.1"/>
</dbReference>
<dbReference type="KEGG" id="vg:935900"/>
<dbReference type="KEGG" id="vg:935901"/>
<dbReference type="OrthoDB" id="12338at10239"/>
<dbReference type="Proteomes" id="UP000008567">
    <property type="component" value="Genome"/>
</dbReference>
<dbReference type="GO" id="GO:0000166">
    <property type="term" value="F:nucleotide binding"/>
    <property type="evidence" value="ECO:0007669"/>
    <property type="project" value="UniProtKB-KW"/>
</dbReference>
<dbReference type="GO" id="GO:0003723">
    <property type="term" value="F:RNA binding"/>
    <property type="evidence" value="ECO:0007669"/>
    <property type="project" value="InterPro"/>
</dbReference>
<dbReference type="GO" id="GO:0003968">
    <property type="term" value="F:RNA-directed RNA polymerase activity"/>
    <property type="evidence" value="ECO:0007669"/>
    <property type="project" value="UniProtKB-KW"/>
</dbReference>
<dbReference type="GO" id="GO:0039694">
    <property type="term" value="P:viral RNA genome replication"/>
    <property type="evidence" value="ECO:0007669"/>
    <property type="project" value="InterPro"/>
</dbReference>
<dbReference type="CDD" id="cd23236">
    <property type="entry name" value="Tombusvirus-like_RdRp"/>
    <property type="match status" value="1"/>
</dbReference>
<dbReference type="Gene3D" id="3.30.70.270">
    <property type="match status" value="1"/>
</dbReference>
<dbReference type="InterPro" id="IPR043502">
    <property type="entry name" value="DNA/RNA_pol_sf"/>
</dbReference>
<dbReference type="InterPro" id="IPR043128">
    <property type="entry name" value="Rev_trsase/Diguanyl_cyclase"/>
</dbReference>
<dbReference type="InterPro" id="IPR007094">
    <property type="entry name" value="RNA-dir_pol_PSvirus"/>
</dbReference>
<dbReference type="InterPro" id="IPR002166">
    <property type="entry name" value="RNA_pol_HCV"/>
</dbReference>
<dbReference type="InterPro" id="IPR013707">
    <property type="entry name" value="Tombusvirus_p33"/>
</dbReference>
<dbReference type="Pfam" id="PF00998">
    <property type="entry name" value="RdRP_3"/>
    <property type="match status" value="1"/>
</dbReference>
<dbReference type="Pfam" id="PF08500">
    <property type="entry name" value="Tombus_P33"/>
    <property type="match status" value="1"/>
</dbReference>
<dbReference type="SUPFAM" id="SSF56672">
    <property type="entry name" value="DNA/RNA polymerases"/>
    <property type="match status" value="1"/>
</dbReference>
<dbReference type="PROSITE" id="PS50507">
    <property type="entry name" value="RDRP_SSRNA_POS"/>
    <property type="match status" value="1"/>
</dbReference>